<sequence>MSQTARRLGPQDMFFLYSESSTTMMHVGALMPFTPPSGAPPDLLRQLVDESKASEVVEPWSLRLSHPELLYHPTQSWVVDDNFDLDYHVRRSALASPGDERELGIPVSRLHSHALDLRRPPWEVHFIEGLEGGRFAIYIKMHHSLIDGYTGQKMLARSLSTDPHDTTHPLFFNIPTPGRSPADTQDSVGGGLIAGAGNVLDGLGDVVRGLGGLVSGVGSVLGSVAGAGRSTFELTKALVNAQLRSDHEYRNLVGSVQAPHCILNTRISRNRRFATQQYPLDRLKAIGAQYDATINDVALAIIGGGLRRFLDELGELPNKSLIVVLPVNVRPKDDEGGGNAVATILATLGTDVADPVQRLAAVTASTRAAKAQLRSMDKDAILAYSAALMAPYGVQLASTLSGVKPPWPYTFNLCVSNVPGPEDVLYVRGSRMEASYPVSLVAHSQALNVTLQSYAGTLNFGFIGCRDTLPHLQRLAVYTGEALDQLAAADGAAGLGS</sequence>
<keyword id="KW-0012">Acyltransferase</keyword>
<keyword id="KW-0319">Glycerol metabolism</keyword>
<keyword id="KW-0444">Lipid biosynthesis</keyword>
<keyword id="KW-0443">Lipid metabolism</keyword>
<keyword id="KW-1185">Reference proteome</keyword>
<keyword id="KW-0808">Transferase</keyword>
<protein>
    <recommendedName>
        <fullName>Putative diacyglycerol O-acyltransferase MT3584</fullName>
        <ecNumber evidence="1">2.3.1.20</ecNumber>
    </recommendedName>
    <alternativeName>
        <fullName>Putative triacylglycerol synthase MT3584</fullName>
    </alternativeName>
</protein>
<gene>
    <name type="ordered locus">MT3584</name>
</gene>
<organism>
    <name type="scientific">Mycobacterium tuberculosis (strain CDC 1551 / Oshkosh)</name>
    <dbReference type="NCBI Taxonomy" id="83331"/>
    <lineage>
        <taxon>Bacteria</taxon>
        <taxon>Bacillati</taxon>
        <taxon>Actinomycetota</taxon>
        <taxon>Actinomycetes</taxon>
        <taxon>Mycobacteriales</taxon>
        <taxon>Mycobacteriaceae</taxon>
        <taxon>Mycobacterium</taxon>
        <taxon>Mycobacterium tuberculosis complex</taxon>
    </lineage>
</organism>
<proteinExistence type="inferred from homology"/>
<comment type="catalytic activity">
    <reaction evidence="1">
        <text>an acyl-CoA + a 1,2-diacyl-sn-glycerol = a triacyl-sn-glycerol + CoA</text>
        <dbReference type="Rhea" id="RHEA:10868"/>
        <dbReference type="ChEBI" id="CHEBI:17815"/>
        <dbReference type="ChEBI" id="CHEBI:57287"/>
        <dbReference type="ChEBI" id="CHEBI:58342"/>
        <dbReference type="ChEBI" id="CHEBI:64615"/>
        <dbReference type="EC" id="2.3.1.20"/>
    </reaction>
</comment>
<comment type="pathway">
    <text>Glycerolipid metabolism; triacylglycerol biosynthesis.</text>
</comment>
<comment type="similarity">
    <text evidence="3">Belongs to the long-chain O-acyltransferase family.</text>
</comment>
<comment type="sequence caution" evidence="3">
    <conflict type="erroneous initiation">
        <sequence resource="EMBL-CDS" id="AAK47943"/>
    </conflict>
    <text>Extended N-terminus.</text>
</comment>
<dbReference type="EC" id="2.3.1.20" evidence="1"/>
<dbReference type="EMBL" id="AE000516">
    <property type="protein sequence ID" value="AAK47943.1"/>
    <property type="status" value="ALT_INIT"/>
    <property type="molecule type" value="Genomic_DNA"/>
</dbReference>
<dbReference type="PIR" id="E70568">
    <property type="entry name" value="E70568"/>
</dbReference>
<dbReference type="RefSeq" id="WP_023641844.1">
    <property type="nucleotide sequence ID" value="NZ_KK341227.1"/>
</dbReference>
<dbReference type="SMR" id="P9WKA6"/>
<dbReference type="KEGG" id="mtc:MT3584"/>
<dbReference type="PATRIC" id="fig|83331.31.peg.3859"/>
<dbReference type="HOGENOM" id="CLU_024186_4_1_11"/>
<dbReference type="UniPathway" id="UPA00282"/>
<dbReference type="Proteomes" id="UP000001020">
    <property type="component" value="Chromosome"/>
</dbReference>
<dbReference type="GO" id="GO:0005886">
    <property type="term" value="C:plasma membrane"/>
    <property type="evidence" value="ECO:0007669"/>
    <property type="project" value="TreeGrafter"/>
</dbReference>
<dbReference type="GO" id="GO:0004144">
    <property type="term" value="F:diacylglycerol O-acyltransferase activity"/>
    <property type="evidence" value="ECO:0007669"/>
    <property type="project" value="UniProtKB-EC"/>
</dbReference>
<dbReference type="GO" id="GO:0051701">
    <property type="term" value="P:biological process involved in interaction with host"/>
    <property type="evidence" value="ECO:0007669"/>
    <property type="project" value="TreeGrafter"/>
</dbReference>
<dbReference type="GO" id="GO:0006071">
    <property type="term" value="P:glycerol metabolic process"/>
    <property type="evidence" value="ECO:0007669"/>
    <property type="project" value="UniProtKB-KW"/>
</dbReference>
<dbReference type="GO" id="GO:0001666">
    <property type="term" value="P:response to hypoxia"/>
    <property type="evidence" value="ECO:0007669"/>
    <property type="project" value="TreeGrafter"/>
</dbReference>
<dbReference type="GO" id="GO:0071731">
    <property type="term" value="P:response to nitric oxide"/>
    <property type="evidence" value="ECO:0007669"/>
    <property type="project" value="TreeGrafter"/>
</dbReference>
<dbReference type="GO" id="GO:0019432">
    <property type="term" value="P:triglyceride biosynthetic process"/>
    <property type="evidence" value="ECO:0007669"/>
    <property type="project" value="UniProtKB-UniPathway"/>
</dbReference>
<dbReference type="InterPro" id="IPR014292">
    <property type="entry name" value="Acyl_transf_WS/DGAT"/>
</dbReference>
<dbReference type="InterPro" id="IPR045034">
    <property type="entry name" value="O-acyltransferase_WSD1-like"/>
</dbReference>
<dbReference type="InterPro" id="IPR009721">
    <property type="entry name" value="O-acyltransferase_WSD1_C"/>
</dbReference>
<dbReference type="InterPro" id="IPR004255">
    <property type="entry name" value="O-acyltransferase_WSD1_N"/>
</dbReference>
<dbReference type="NCBIfam" id="TIGR02946">
    <property type="entry name" value="acyl_WS_DGAT"/>
    <property type="match status" value="1"/>
</dbReference>
<dbReference type="PANTHER" id="PTHR31650">
    <property type="entry name" value="O-ACYLTRANSFERASE (WSD1-LIKE) FAMILY PROTEIN"/>
    <property type="match status" value="1"/>
</dbReference>
<dbReference type="PANTHER" id="PTHR31650:SF1">
    <property type="entry name" value="WAX ESTER SYNTHASE_DIACYLGLYCEROL ACYLTRANSFERASE 4-RELATED"/>
    <property type="match status" value="1"/>
</dbReference>
<dbReference type="Pfam" id="PF06974">
    <property type="entry name" value="WS_DGAT_C"/>
    <property type="match status" value="1"/>
</dbReference>
<dbReference type="Pfam" id="PF03007">
    <property type="entry name" value="WS_DGAT_cat"/>
    <property type="match status" value="1"/>
</dbReference>
<dbReference type="SUPFAM" id="SSF52777">
    <property type="entry name" value="CoA-dependent acyltransferases"/>
    <property type="match status" value="1"/>
</dbReference>
<evidence type="ECO:0000250" key="1">
    <source>
        <dbReference type="UniProtKB" id="P9WKC9"/>
    </source>
</evidence>
<evidence type="ECO:0000255" key="2"/>
<evidence type="ECO:0000305" key="3"/>
<reference key="1">
    <citation type="journal article" date="2002" name="J. Bacteriol.">
        <title>Whole-genome comparison of Mycobacterium tuberculosis clinical and laboratory strains.</title>
        <authorList>
            <person name="Fleischmann R.D."/>
            <person name="Alland D."/>
            <person name="Eisen J.A."/>
            <person name="Carpenter L."/>
            <person name="White O."/>
            <person name="Peterson J.D."/>
            <person name="DeBoy R.T."/>
            <person name="Dodson R.J."/>
            <person name="Gwinn M.L."/>
            <person name="Haft D.H."/>
            <person name="Hickey E.K."/>
            <person name="Kolonay J.F."/>
            <person name="Nelson W.C."/>
            <person name="Umayam L.A."/>
            <person name="Ermolaeva M.D."/>
            <person name="Salzberg S.L."/>
            <person name="Delcher A."/>
            <person name="Utterback T.R."/>
            <person name="Weidman J.F."/>
            <person name="Khouri H.M."/>
            <person name="Gill J."/>
            <person name="Mikula A."/>
            <person name="Bishai W."/>
            <person name="Jacobs W.R. Jr."/>
            <person name="Venter J.C."/>
            <person name="Fraser C.M."/>
        </authorList>
    </citation>
    <scope>NUCLEOTIDE SEQUENCE [LARGE SCALE GENOMIC DNA]</scope>
    <source>
        <strain>CDC 1551 / Oshkosh</strain>
    </source>
</reference>
<feature type="chain" id="PRO_0000427687" description="Putative diacyglycerol O-acyltransferase MT3584">
    <location>
        <begin position="1"/>
        <end position="497"/>
    </location>
</feature>
<feature type="active site" description="Proton acceptor" evidence="2">
    <location>
        <position position="143"/>
    </location>
</feature>
<name>Y3480_MYCTO</name>
<accession>P9WKA6</accession>
<accession>L0TE90</accession>
<accession>O06343</accession>